<gene>
    <name type="primary">dinF</name>
    <name type="ordered locus">b4044</name>
    <name type="ordered locus">JW4004</name>
</gene>
<comment type="subcellular location">
    <subcellularLocation>
        <location evidence="2">Cell inner membrane</location>
        <topology evidence="2">Multi-pass membrane protein</topology>
    </subcellularLocation>
</comment>
<comment type="induction">
    <text>By DNA damage.</text>
</comment>
<comment type="similarity">
    <text evidence="3">Belongs to the multi antimicrobial extrusion (MATE) (TC 2.A.66.1) family.</text>
</comment>
<proteinExistence type="evidence at transcript level"/>
<accession>P28303</accession>
<accession>Q2M6R0</accession>
<name>DINF_ECOLI</name>
<evidence type="ECO:0000255" key="1"/>
<evidence type="ECO:0000269" key="2">
    <source>
    </source>
</evidence>
<evidence type="ECO:0000305" key="3"/>
<keyword id="KW-0997">Cell inner membrane</keyword>
<keyword id="KW-1003">Cell membrane</keyword>
<keyword id="KW-0472">Membrane</keyword>
<keyword id="KW-1185">Reference proteome</keyword>
<keyword id="KW-0812">Transmembrane</keyword>
<keyword id="KW-1133">Transmembrane helix</keyword>
<organism>
    <name type="scientific">Escherichia coli (strain K12)</name>
    <dbReference type="NCBI Taxonomy" id="83333"/>
    <lineage>
        <taxon>Bacteria</taxon>
        <taxon>Pseudomonadati</taxon>
        <taxon>Pseudomonadota</taxon>
        <taxon>Gammaproteobacteria</taxon>
        <taxon>Enterobacterales</taxon>
        <taxon>Enterobacteriaceae</taxon>
        <taxon>Escherichia</taxon>
    </lineage>
</organism>
<sequence>MPPGVAVCFSSLFIRLVCMAFLTSSDKALWHLALPMIFSNITVPLLGLVDTAVIGHLDSPVYLGGVAVGATATSFLFMLLLFLRMSTTGLTAQAYGAKNPQALARTLVQPLLLALGAGALIALLRTPIIDLALHIVGGSEAVLEQARRFLEIRWLSAPASLANLVLLGWLLGVQYARAPVILLVVGNILNIVLDVWLVMGLHMNVQGAALATVIAEYATLLIGLLMVRKILKLRGISGEMLKTAWRGNFRRLLALNRDIMLRSLLLQLCFGAITVLGARLGSDIIAVNAVLMTLLTFTAYALDGFAYAVEAHSGQAYGARDGSQLLDVWRAACRQSGIVALLFSVVYLLAGEHIIALLTSLTQIQQLADRYLIWQVILPVVGVWCYLLDGMFIGATRATEMRNSMAVAAAGFALTLLTLPWLGNHALWLALTVFLALRGLSLAAIWRRHWRNGTWFAAT</sequence>
<reference key="1">
    <citation type="submission" date="1992-09" db="EMBL/GenBank/DDBJ databases">
        <title>E. coli dinF gene.</title>
        <authorList>
            <person name="Lilley P.E."/>
            <person name="Dixon N.E."/>
        </authorList>
    </citation>
    <scope>NUCLEOTIDE SEQUENCE [GENOMIC DNA]</scope>
    <source>
        <strain>K12</strain>
    </source>
</reference>
<reference key="2">
    <citation type="journal article" date="1993" name="Nucleic Acids Res.">
        <title>Analysis of the Escherichia coli genome. IV. DNA sequence of the region from 89.2 to 92.8 minutes.</title>
        <authorList>
            <person name="Blattner F.R."/>
            <person name="Burland V.D."/>
            <person name="Plunkett G. III"/>
            <person name="Sofia H.J."/>
            <person name="Daniels D.L."/>
        </authorList>
    </citation>
    <scope>NUCLEOTIDE SEQUENCE [LARGE SCALE GENOMIC DNA]</scope>
    <source>
        <strain>K12 / MG1655 / ATCC 47076</strain>
    </source>
</reference>
<reference key="3">
    <citation type="journal article" date="1997" name="Science">
        <title>The complete genome sequence of Escherichia coli K-12.</title>
        <authorList>
            <person name="Blattner F.R."/>
            <person name="Plunkett G. III"/>
            <person name="Bloch C.A."/>
            <person name="Perna N.T."/>
            <person name="Burland V."/>
            <person name="Riley M."/>
            <person name="Collado-Vides J."/>
            <person name="Glasner J.D."/>
            <person name="Rode C.K."/>
            <person name="Mayhew G.F."/>
            <person name="Gregor J."/>
            <person name="Davis N.W."/>
            <person name="Kirkpatrick H.A."/>
            <person name="Goeden M.A."/>
            <person name="Rose D.J."/>
            <person name="Mau B."/>
            <person name="Shao Y."/>
        </authorList>
    </citation>
    <scope>NUCLEOTIDE SEQUENCE [LARGE SCALE GENOMIC DNA]</scope>
    <source>
        <strain>K12 / MG1655 / ATCC 47076</strain>
    </source>
</reference>
<reference key="4">
    <citation type="journal article" date="2006" name="Mol. Syst. Biol.">
        <title>Highly accurate genome sequences of Escherichia coli K-12 strains MG1655 and W3110.</title>
        <authorList>
            <person name="Hayashi K."/>
            <person name="Morooka N."/>
            <person name="Yamamoto Y."/>
            <person name="Fujita K."/>
            <person name="Isono K."/>
            <person name="Choi S."/>
            <person name="Ohtsubo E."/>
            <person name="Baba T."/>
            <person name="Wanner B.L."/>
            <person name="Mori H."/>
            <person name="Horiuchi T."/>
        </authorList>
    </citation>
    <scope>NUCLEOTIDE SEQUENCE [LARGE SCALE GENOMIC DNA]</scope>
    <source>
        <strain>K12 / W3110 / ATCC 27325 / DSM 5911</strain>
    </source>
</reference>
<reference key="5">
    <citation type="journal article" date="2005" name="Science">
        <title>Global topology analysis of the Escherichia coli inner membrane proteome.</title>
        <authorList>
            <person name="Daley D.O."/>
            <person name="Rapp M."/>
            <person name="Granseth E."/>
            <person name="Melen K."/>
            <person name="Drew D."/>
            <person name="von Heijne G."/>
        </authorList>
    </citation>
    <scope>SUBCELLULAR LOCATION</scope>
    <source>
        <strain>K12 / MG1655 / ATCC 47076</strain>
    </source>
</reference>
<protein>
    <recommendedName>
        <fullName>DNA damage-inducible protein F</fullName>
    </recommendedName>
</protein>
<dbReference type="EMBL" id="L02362">
    <property type="protein sequence ID" value="AAA24069.1"/>
    <property type="molecule type" value="Genomic_DNA"/>
</dbReference>
<dbReference type="EMBL" id="U00006">
    <property type="protein sequence ID" value="AAC43138.1"/>
    <property type="molecule type" value="Genomic_DNA"/>
</dbReference>
<dbReference type="EMBL" id="U00096">
    <property type="protein sequence ID" value="AAC77014.1"/>
    <property type="molecule type" value="Genomic_DNA"/>
</dbReference>
<dbReference type="EMBL" id="AP009048">
    <property type="protein sequence ID" value="BAE78046.1"/>
    <property type="molecule type" value="Genomic_DNA"/>
</dbReference>
<dbReference type="PIR" id="C65212">
    <property type="entry name" value="C65212"/>
</dbReference>
<dbReference type="RefSeq" id="NP_418468.3">
    <property type="nucleotide sequence ID" value="NC_000913.3"/>
</dbReference>
<dbReference type="SMR" id="P28303"/>
<dbReference type="BioGRID" id="4261722">
    <property type="interactions" value="64"/>
</dbReference>
<dbReference type="FunCoup" id="P28303">
    <property type="interactions" value="128"/>
</dbReference>
<dbReference type="STRING" id="511145.b4044"/>
<dbReference type="TCDB" id="2.A.66.1.4">
    <property type="family name" value="the multidrug/oligosaccharidyl-lipid/polysaccharide (mop) flippase superfamily"/>
</dbReference>
<dbReference type="PaxDb" id="511145-b4044"/>
<dbReference type="EnsemblBacteria" id="AAC77014">
    <property type="protein sequence ID" value="AAC77014"/>
    <property type="gene ID" value="b4044"/>
</dbReference>
<dbReference type="GeneID" id="948554"/>
<dbReference type="KEGG" id="ecj:JW4004"/>
<dbReference type="KEGG" id="eco:b4044"/>
<dbReference type="PATRIC" id="fig|511145.12.peg.4161"/>
<dbReference type="EchoBASE" id="EB1454"/>
<dbReference type="eggNOG" id="COG0534">
    <property type="taxonomic scope" value="Bacteria"/>
</dbReference>
<dbReference type="HOGENOM" id="CLU_012893_16_0_6"/>
<dbReference type="InParanoid" id="P28303"/>
<dbReference type="OMA" id="MDGIWLA"/>
<dbReference type="OrthoDB" id="9789527at2"/>
<dbReference type="PhylomeDB" id="P28303"/>
<dbReference type="BioCyc" id="EcoCyc:DINF-MONOMER"/>
<dbReference type="PRO" id="PR:P28303"/>
<dbReference type="Proteomes" id="UP000000625">
    <property type="component" value="Chromosome"/>
</dbReference>
<dbReference type="GO" id="GO:0005886">
    <property type="term" value="C:plasma membrane"/>
    <property type="evidence" value="ECO:0000314"/>
    <property type="project" value="EcoCyc"/>
</dbReference>
<dbReference type="GO" id="GO:0015297">
    <property type="term" value="F:antiporter activity"/>
    <property type="evidence" value="ECO:0007669"/>
    <property type="project" value="InterPro"/>
</dbReference>
<dbReference type="GO" id="GO:0042910">
    <property type="term" value="F:xenobiotic transmembrane transporter activity"/>
    <property type="evidence" value="ECO:0007669"/>
    <property type="project" value="InterPro"/>
</dbReference>
<dbReference type="CDD" id="cd13136">
    <property type="entry name" value="MATE_DinF_like"/>
    <property type="match status" value="1"/>
</dbReference>
<dbReference type="InterPro" id="IPR044644">
    <property type="entry name" value="DinF-like"/>
</dbReference>
<dbReference type="InterPro" id="IPR002528">
    <property type="entry name" value="MATE_fam"/>
</dbReference>
<dbReference type="NCBIfam" id="TIGR00797">
    <property type="entry name" value="matE"/>
    <property type="match status" value="1"/>
</dbReference>
<dbReference type="NCBIfam" id="NF007690">
    <property type="entry name" value="PRK10367.1"/>
    <property type="match status" value="1"/>
</dbReference>
<dbReference type="PANTHER" id="PTHR42893:SF46">
    <property type="entry name" value="PROTEIN DETOXIFICATION 44, CHLOROPLASTIC"/>
    <property type="match status" value="1"/>
</dbReference>
<dbReference type="PANTHER" id="PTHR42893">
    <property type="entry name" value="PROTEIN DETOXIFICATION 44, CHLOROPLASTIC-RELATED"/>
    <property type="match status" value="1"/>
</dbReference>
<dbReference type="Pfam" id="PF01554">
    <property type="entry name" value="MatE"/>
    <property type="match status" value="2"/>
</dbReference>
<feature type="chain" id="PRO_0000164258" description="DNA damage-inducible protein F">
    <location>
        <begin position="1"/>
        <end position="459"/>
    </location>
</feature>
<feature type="transmembrane region" description="Helical" evidence="1">
    <location>
        <begin position="2"/>
        <end position="22"/>
    </location>
</feature>
<feature type="transmembrane region" description="Helical" evidence="1">
    <location>
        <begin position="29"/>
        <end position="49"/>
    </location>
</feature>
<feature type="transmembrane region" description="Helical" evidence="1">
    <location>
        <begin position="63"/>
        <end position="83"/>
    </location>
</feature>
<feature type="transmembrane region" description="Helical" evidence="1">
    <location>
        <begin position="111"/>
        <end position="131"/>
    </location>
</feature>
<feature type="transmembrane region" description="Helical" evidence="1">
    <location>
        <begin position="154"/>
        <end position="174"/>
    </location>
</feature>
<feature type="transmembrane region" description="Helical" evidence="1">
    <location>
        <begin position="180"/>
        <end position="200"/>
    </location>
</feature>
<feature type="transmembrane region" description="Helical" evidence="1">
    <location>
        <begin position="207"/>
        <end position="227"/>
    </location>
</feature>
<feature type="transmembrane region" description="Helical" evidence="1">
    <location>
        <begin position="265"/>
        <end position="285"/>
    </location>
</feature>
<feature type="transmembrane region" description="Helical" evidence="1">
    <location>
        <begin position="289"/>
        <end position="309"/>
    </location>
</feature>
<feature type="transmembrane region" description="Helical" evidence="1">
    <location>
        <begin position="338"/>
        <end position="358"/>
    </location>
</feature>
<feature type="transmembrane region" description="Helical" evidence="1">
    <location>
        <begin position="373"/>
        <end position="393"/>
    </location>
</feature>
<feature type="transmembrane region" description="Helical" evidence="1">
    <location>
        <begin position="416"/>
        <end position="436"/>
    </location>
</feature>